<accession>P34936</accession>
<protein>
    <recommendedName>
        <fullName>Superoxide dismutase [Cu-Zn]</fullName>
        <ecNumber>1.15.1.1</ecNumber>
    </recommendedName>
</protein>
<reference key="1">
    <citation type="journal article" date="1993" name="Electrophoresis">
        <title>Separation of acidic barley endosperm proteins by two-dimensional electrophoresis.</title>
        <authorList>
            <person name="Flengsrud R."/>
        </authorList>
    </citation>
    <scope>PROTEIN SEQUENCE OF 2-22</scope>
    <source>
        <strain>cv. H354-295-2-5</strain>
        <tissue>Starchy endosperm</tissue>
    </source>
</reference>
<evidence type="ECO:0000250" key="1"/>
<evidence type="ECO:0000269" key="2">
    <source>
    </source>
</evidence>
<evidence type="ECO:0000305" key="3"/>
<keyword id="KW-0049">Antioxidant</keyword>
<keyword id="KW-0186">Copper</keyword>
<keyword id="KW-0963">Cytoplasm</keyword>
<keyword id="KW-0903">Direct protein sequencing</keyword>
<keyword id="KW-0479">Metal-binding</keyword>
<keyword id="KW-0560">Oxidoreductase</keyword>
<keyword id="KW-0862">Zinc</keyword>
<sequence>MXKAVAVLTGSEGVXGTIFFTQ</sequence>
<dbReference type="EC" id="1.15.1.1"/>
<dbReference type="GO" id="GO:0005737">
    <property type="term" value="C:cytoplasm"/>
    <property type="evidence" value="ECO:0007669"/>
    <property type="project" value="UniProtKB-SubCell"/>
</dbReference>
<dbReference type="GO" id="GO:0046872">
    <property type="term" value="F:metal ion binding"/>
    <property type="evidence" value="ECO:0007669"/>
    <property type="project" value="UniProtKB-KW"/>
</dbReference>
<dbReference type="GO" id="GO:0004784">
    <property type="term" value="F:superoxide dismutase activity"/>
    <property type="evidence" value="ECO:0007669"/>
    <property type="project" value="UniProtKB-EC"/>
</dbReference>
<organism>
    <name type="scientific">Hordeum vulgare</name>
    <name type="common">Barley</name>
    <dbReference type="NCBI Taxonomy" id="4513"/>
    <lineage>
        <taxon>Eukaryota</taxon>
        <taxon>Viridiplantae</taxon>
        <taxon>Streptophyta</taxon>
        <taxon>Embryophyta</taxon>
        <taxon>Tracheophyta</taxon>
        <taxon>Spermatophyta</taxon>
        <taxon>Magnoliopsida</taxon>
        <taxon>Liliopsida</taxon>
        <taxon>Poales</taxon>
        <taxon>Poaceae</taxon>
        <taxon>BOP clade</taxon>
        <taxon>Pooideae</taxon>
        <taxon>Triticodae</taxon>
        <taxon>Triticeae</taxon>
        <taxon>Hordeinae</taxon>
        <taxon>Hordeum</taxon>
    </lineage>
</organism>
<feature type="initiator methionine" description="Removed" evidence="2">
    <location>
        <position position="1"/>
    </location>
</feature>
<feature type="chain" id="PRO_0000164137" description="Superoxide dismutase [Cu-Zn]">
    <location>
        <begin position="2"/>
        <end position="22" status="greater than"/>
    </location>
</feature>
<feature type="non-terminal residue">
    <location>
        <position position="22"/>
    </location>
</feature>
<proteinExistence type="evidence at protein level"/>
<comment type="function">
    <text>Destroys radicals which are normally produced within the cells and which are toxic to biological systems.</text>
</comment>
<comment type="catalytic activity">
    <reaction>
        <text>2 superoxide + 2 H(+) = H2O2 + O2</text>
        <dbReference type="Rhea" id="RHEA:20696"/>
        <dbReference type="ChEBI" id="CHEBI:15378"/>
        <dbReference type="ChEBI" id="CHEBI:15379"/>
        <dbReference type="ChEBI" id="CHEBI:16240"/>
        <dbReference type="ChEBI" id="CHEBI:18421"/>
        <dbReference type="EC" id="1.15.1.1"/>
    </reaction>
</comment>
<comment type="cofactor">
    <cofactor evidence="1">
        <name>Cu cation</name>
        <dbReference type="ChEBI" id="CHEBI:23378"/>
    </cofactor>
    <text evidence="1">Binds 1 copper ion per subunit.</text>
</comment>
<comment type="cofactor">
    <cofactor evidence="1">
        <name>Zn(2+)</name>
        <dbReference type="ChEBI" id="CHEBI:29105"/>
    </cofactor>
    <text evidence="1">Binds 1 zinc ion per subunit.</text>
</comment>
<comment type="subunit">
    <text>Homodimer.</text>
</comment>
<comment type="subcellular location">
    <subcellularLocation>
        <location>Cytoplasm</location>
    </subcellularLocation>
</comment>
<comment type="similarity">
    <text evidence="3">Belongs to the Cu-Zn superoxide dismutase family.</text>
</comment>
<name>SODC_HORVU</name>